<comment type="function">
    <text>Guanine nucleotide-binding proteins (G proteins) are involved as a modulator or transducer in various transmembrane signaling systems. The beta and gamma chains are required for the GTPase activity, for replacement of GDP by GTP, and for G protein-effector interaction.</text>
</comment>
<comment type="subunit">
    <text>G proteins are composed of 3 units, alpha, beta and gamma. Interacts with beta-1 and beta-3, but not with beta-2.</text>
</comment>
<comment type="interaction">
    <interactant intactId="EBI-720198">
        <id>P61952</id>
    </interactant>
    <interactant intactId="EBI-744115">
        <id>Q9C0F1</id>
        <label>CEP44</label>
    </interactant>
    <organismsDiffer>false</organismsDiffer>
    <experiments>3</experiments>
</comment>
<comment type="interaction">
    <interactant intactId="EBI-720198">
        <id>P61952</id>
    </interactant>
    <interactant intactId="EBI-12048237">
        <id>Q6BDI9</id>
        <label>REP15</label>
    </interactant>
    <organismsDiffer>false</organismsDiffer>
    <experiments>3</experiments>
</comment>
<comment type="subcellular location">
    <subcellularLocation>
        <location evidence="4">Cell membrane</location>
        <topology evidence="4">Lipid-anchor</topology>
        <orientation evidence="4">Cytoplasmic side</orientation>
    </subcellularLocation>
</comment>
<comment type="tissue specificity">
    <text>Abundantly expressed in all tissues tested except for brain.</text>
</comment>
<comment type="similarity">
    <text evidence="4">Belongs to the G protein gamma family.</text>
</comment>
<proteinExistence type="evidence at protein level"/>
<accession>P61952</accession>
<accession>P50152</accession>
<evidence type="ECO:0000255" key="1"/>
<evidence type="ECO:0000256" key="2">
    <source>
        <dbReference type="SAM" id="MobiDB-lite"/>
    </source>
</evidence>
<evidence type="ECO:0000269" key="3">
    <source>
    </source>
</evidence>
<evidence type="ECO:0000305" key="4"/>
<reference key="1">
    <citation type="journal article" date="1995" name="J. Biol. Chem.">
        <title>Isolation of cDNA clones encoding eight different human G protein gamma subunits, including three novel forms designated the gamma 4, gamma 10, and gamma 11 subunits.</title>
        <authorList>
            <person name="Ray K."/>
            <person name="Kunsch C."/>
            <person name="Bonner L.M."/>
            <person name="Robishaw J.D."/>
        </authorList>
    </citation>
    <scope>NUCLEOTIDE SEQUENCE [MRNA]</scope>
    <scope>ISOPRENYLATION AT CYS-70</scope>
    <source>
        <tissue>Testis</tissue>
    </source>
</reference>
<reference key="2">
    <citation type="submission" date="2002-03" db="EMBL/GenBank/DDBJ databases">
        <title>cDNA clones of human proteins involved in signal transduction sequenced by the Guthrie cDNA resource center (www.cdna.org).</title>
        <authorList>
            <person name="Puhl H.L. III"/>
            <person name="Ikeda S.R."/>
            <person name="Aronstam R.S."/>
        </authorList>
    </citation>
    <scope>NUCLEOTIDE SEQUENCE [LARGE SCALE MRNA]</scope>
</reference>
<reference key="3">
    <citation type="journal article" date="2003" name="Nature">
        <title>The DNA sequence of human chromosome 7.</title>
        <authorList>
            <person name="Hillier L.W."/>
            <person name="Fulton R.S."/>
            <person name="Fulton L.A."/>
            <person name="Graves T.A."/>
            <person name="Pepin K.H."/>
            <person name="Wagner-McPherson C."/>
            <person name="Layman D."/>
            <person name="Maas J."/>
            <person name="Jaeger S."/>
            <person name="Walker R."/>
            <person name="Wylie K."/>
            <person name="Sekhon M."/>
            <person name="Becker M.C."/>
            <person name="O'Laughlin M.D."/>
            <person name="Schaller M.E."/>
            <person name="Fewell G.A."/>
            <person name="Delehaunty K.D."/>
            <person name="Miner T.L."/>
            <person name="Nash W.E."/>
            <person name="Cordes M."/>
            <person name="Du H."/>
            <person name="Sun H."/>
            <person name="Edwards J."/>
            <person name="Bradshaw-Cordum H."/>
            <person name="Ali J."/>
            <person name="Andrews S."/>
            <person name="Isak A."/>
            <person name="Vanbrunt A."/>
            <person name="Nguyen C."/>
            <person name="Du F."/>
            <person name="Lamar B."/>
            <person name="Courtney L."/>
            <person name="Kalicki J."/>
            <person name="Ozersky P."/>
            <person name="Bielicki L."/>
            <person name="Scott K."/>
            <person name="Holmes A."/>
            <person name="Harkins R."/>
            <person name="Harris A."/>
            <person name="Strong C.M."/>
            <person name="Hou S."/>
            <person name="Tomlinson C."/>
            <person name="Dauphin-Kohlberg S."/>
            <person name="Kozlowicz-Reilly A."/>
            <person name="Leonard S."/>
            <person name="Rohlfing T."/>
            <person name="Rock S.M."/>
            <person name="Tin-Wollam A.-M."/>
            <person name="Abbott A."/>
            <person name="Minx P."/>
            <person name="Maupin R."/>
            <person name="Strowmatt C."/>
            <person name="Latreille P."/>
            <person name="Miller N."/>
            <person name="Johnson D."/>
            <person name="Murray J."/>
            <person name="Woessner J.P."/>
            <person name="Wendl M.C."/>
            <person name="Yang S.-P."/>
            <person name="Schultz B.R."/>
            <person name="Wallis J.W."/>
            <person name="Spieth J."/>
            <person name="Bieri T.A."/>
            <person name="Nelson J.O."/>
            <person name="Berkowicz N."/>
            <person name="Wohldmann P.E."/>
            <person name="Cook L.L."/>
            <person name="Hickenbotham M.T."/>
            <person name="Eldred J."/>
            <person name="Williams D."/>
            <person name="Bedell J.A."/>
            <person name="Mardis E.R."/>
            <person name="Clifton S.W."/>
            <person name="Chissoe S.L."/>
            <person name="Marra M.A."/>
            <person name="Raymond C."/>
            <person name="Haugen E."/>
            <person name="Gillett W."/>
            <person name="Zhou Y."/>
            <person name="James R."/>
            <person name="Phelps K."/>
            <person name="Iadanoto S."/>
            <person name="Bubb K."/>
            <person name="Simms E."/>
            <person name="Levy R."/>
            <person name="Clendenning J."/>
            <person name="Kaul R."/>
            <person name="Kent W.J."/>
            <person name="Furey T.S."/>
            <person name="Baertsch R.A."/>
            <person name="Brent M.R."/>
            <person name="Keibler E."/>
            <person name="Flicek P."/>
            <person name="Bork P."/>
            <person name="Suyama M."/>
            <person name="Bailey J.A."/>
            <person name="Portnoy M.E."/>
            <person name="Torrents D."/>
            <person name="Chinwalla A.T."/>
            <person name="Gish W.R."/>
            <person name="Eddy S.R."/>
            <person name="McPherson J.D."/>
            <person name="Olson M.V."/>
            <person name="Eichler E.E."/>
            <person name="Green E.D."/>
            <person name="Waterston R.H."/>
            <person name="Wilson R.K."/>
        </authorList>
    </citation>
    <scope>NUCLEOTIDE SEQUENCE [LARGE SCALE GENOMIC DNA]</scope>
</reference>
<reference key="4">
    <citation type="journal article" date="2004" name="Genome Res.">
        <title>The status, quality, and expansion of the NIH full-length cDNA project: the Mammalian Gene Collection (MGC).</title>
        <authorList>
            <consortium name="The MGC Project Team"/>
        </authorList>
    </citation>
    <scope>NUCLEOTIDE SEQUENCE [LARGE SCALE MRNA]</scope>
    <source>
        <tissue>Lung</tissue>
    </source>
</reference>
<protein>
    <recommendedName>
        <fullName>Guanine nucleotide-binding protein G(I)/G(S)/G(O) subunit gamma-11</fullName>
    </recommendedName>
</protein>
<sequence length="73" mass="8481">MPALHIEDLPEKEKLKMEVEQLRKEVKLQRQQVSKCSEEIKNYIEERSGEDPLVKGIPEDKNPFKEKGSCVIS</sequence>
<feature type="chain" id="PRO_0000012659" description="Guanine nucleotide-binding protein G(I)/G(S)/G(O) subunit gamma-11">
    <location>
        <begin position="1"/>
        <end position="70"/>
    </location>
</feature>
<feature type="propeptide" id="PRO_0000012660" description="Removed in mature form">
    <location>
        <begin position="71"/>
        <end position="73"/>
    </location>
</feature>
<feature type="region of interest" description="Disordered" evidence="2">
    <location>
        <begin position="51"/>
        <end position="73"/>
    </location>
</feature>
<feature type="modified residue" description="Cysteine methyl ester" evidence="1">
    <location>
        <position position="70"/>
    </location>
</feature>
<feature type="lipid moiety-binding region" description="S-farnesyl cysteine" evidence="3">
    <location>
        <position position="70"/>
    </location>
</feature>
<organism>
    <name type="scientific">Homo sapiens</name>
    <name type="common">Human</name>
    <dbReference type="NCBI Taxonomy" id="9606"/>
    <lineage>
        <taxon>Eukaryota</taxon>
        <taxon>Metazoa</taxon>
        <taxon>Chordata</taxon>
        <taxon>Craniata</taxon>
        <taxon>Vertebrata</taxon>
        <taxon>Euteleostomi</taxon>
        <taxon>Mammalia</taxon>
        <taxon>Eutheria</taxon>
        <taxon>Euarchontoglires</taxon>
        <taxon>Primates</taxon>
        <taxon>Haplorrhini</taxon>
        <taxon>Catarrhini</taxon>
        <taxon>Hominidae</taxon>
        <taxon>Homo</taxon>
    </lineage>
</organism>
<dbReference type="EMBL" id="U31384">
    <property type="protein sequence ID" value="AAC50206.1"/>
    <property type="molecule type" value="mRNA"/>
</dbReference>
<dbReference type="EMBL" id="AF493878">
    <property type="protein sequence ID" value="AAM12592.1"/>
    <property type="molecule type" value="mRNA"/>
</dbReference>
<dbReference type="EMBL" id="AC002076">
    <property type="protein sequence ID" value="AAS02020.1"/>
    <property type="molecule type" value="Genomic_DNA"/>
</dbReference>
<dbReference type="EMBL" id="BC009709">
    <property type="protein sequence ID" value="AAH09709.1"/>
    <property type="molecule type" value="mRNA"/>
</dbReference>
<dbReference type="CCDS" id="CCDS5634.1"/>
<dbReference type="PIR" id="I39159">
    <property type="entry name" value="I39159"/>
</dbReference>
<dbReference type="RefSeq" id="NP_004117.1">
    <property type="nucleotide sequence ID" value="NM_004126.4"/>
</dbReference>
<dbReference type="SMR" id="P61952"/>
<dbReference type="BioGRID" id="109053">
    <property type="interactions" value="13"/>
</dbReference>
<dbReference type="CORUM" id="P61952"/>
<dbReference type="FunCoup" id="P61952">
    <property type="interactions" value="1543"/>
</dbReference>
<dbReference type="IntAct" id="P61952">
    <property type="interactions" value="7"/>
</dbReference>
<dbReference type="STRING" id="9606.ENSP00000248564"/>
<dbReference type="iPTMnet" id="P61952"/>
<dbReference type="PhosphoSitePlus" id="P61952"/>
<dbReference type="BioMuta" id="GNG11"/>
<dbReference type="DMDM" id="48428913"/>
<dbReference type="jPOST" id="P61952"/>
<dbReference type="MassIVE" id="P61952"/>
<dbReference type="PaxDb" id="9606-ENSP00000248564"/>
<dbReference type="PeptideAtlas" id="P61952"/>
<dbReference type="ProteomicsDB" id="57341"/>
<dbReference type="Pumba" id="P61952"/>
<dbReference type="TopDownProteomics" id="P61952"/>
<dbReference type="Antibodypedia" id="30078">
    <property type="antibodies" value="94 antibodies from 19 providers"/>
</dbReference>
<dbReference type="DNASU" id="2791"/>
<dbReference type="Ensembl" id="ENST00000248564.6">
    <property type="protein sequence ID" value="ENSP00000248564.4"/>
    <property type="gene ID" value="ENSG00000127920.6"/>
</dbReference>
<dbReference type="GeneID" id="2791"/>
<dbReference type="KEGG" id="hsa:2791"/>
<dbReference type="MANE-Select" id="ENST00000248564.6">
    <property type="protein sequence ID" value="ENSP00000248564.4"/>
    <property type="RefSeq nucleotide sequence ID" value="NM_004126.4"/>
    <property type="RefSeq protein sequence ID" value="NP_004117.1"/>
</dbReference>
<dbReference type="AGR" id="HGNC:4403"/>
<dbReference type="CTD" id="2791"/>
<dbReference type="DisGeNET" id="2791"/>
<dbReference type="GeneCards" id="GNG11"/>
<dbReference type="HGNC" id="HGNC:4403">
    <property type="gene designation" value="GNG11"/>
</dbReference>
<dbReference type="HPA" id="ENSG00000127920">
    <property type="expression patterns" value="Low tissue specificity"/>
</dbReference>
<dbReference type="MIM" id="604390">
    <property type="type" value="gene"/>
</dbReference>
<dbReference type="neXtProt" id="NX_P61952"/>
<dbReference type="OpenTargets" id="ENSG00000127920"/>
<dbReference type="PharmGKB" id="PA28782"/>
<dbReference type="VEuPathDB" id="HostDB:ENSG00000127920"/>
<dbReference type="eggNOG" id="KOG4119">
    <property type="taxonomic scope" value="Eukaryota"/>
</dbReference>
<dbReference type="GeneTree" id="ENSGT01100000263525"/>
<dbReference type="HOGENOM" id="CLU_168377_2_0_1"/>
<dbReference type="InParanoid" id="P61952"/>
<dbReference type="OMA" id="KLERWMT"/>
<dbReference type="OrthoDB" id="9933679at2759"/>
<dbReference type="PAN-GO" id="P61952">
    <property type="GO annotations" value="3 GO annotations based on evolutionary models"/>
</dbReference>
<dbReference type="PhylomeDB" id="P61952"/>
<dbReference type="TreeFam" id="TF319909"/>
<dbReference type="PathwayCommons" id="P61952"/>
<dbReference type="Reactome" id="R-HSA-1296041">
    <property type="pathway name" value="Activation of G protein gated Potassium channels"/>
</dbReference>
<dbReference type="Reactome" id="R-HSA-163359">
    <property type="pathway name" value="Glucagon signaling in metabolic regulation"/>
</dbReference>
<dbReference type="Reactome" id="R-HSA-202040">
    <property type="pathway name" value="G-protein activation"/>
</dbReference>
<dbReference type="Reactome" id="R-HSA-381676">
    <property type="pathway name" value="Glucagon-like Peptide-1 (GLP1) regulates insulin secretion"/>
</dbReference>
<dbReference type="Reactome" id="R-HSA-392170">
    <property type="pathway name" value="ADP signalling through P2Y purinoceptor 12"/>
</dbReference>
<dbReference type="Reactome" id="R-HSA-392451">
    <property type="pathway name" value="G beta:gamma signalling through PI3Kgamma"/>
</dbReference>
<dbReference type="Reactome" id="R-HSA-392851">
    <property type="pathway name" value="Prostacyclin signalling through prostacyclin receptor"/>
</dbReference>
<dbReference type="Reactome" id="R-HSA-400042">
    <property type="pathway name" value="Adrenaline,noradrenaline inhibits insulin secretion"/>
</dbReference>
<dbReference type="Reactome" id="R-HSA-4086398">
    <property type="pathway name" value="Ca2+ pathway"/>
</dbReference>
<dbReference type="Reactome" id="R-HSA-416476">
    <property type="pathway name" value="G alpha (q) signalling events"/>
</dbReference>
<dbReference type="Reactome" id="R-HSA-416482">
    <property type="pathway name" value="G alpha (12/13) signalling events"/>
</dbReference>
<dbReference type="Reactome" id="R-HSA-418217">
    <property type="pathway name" value="G beta:gamma signalling through PLC beta"/>
</dbReference>
<dbReference type="Reactome" id="R-HSA-418555">
    <property type="pathway name" value="G alpha (s) signalling events"/>
</dbReference>
<dbReference type="Reactome" id="R-HSA-418592">
    <property type="pathway name" value="ADP signalling through P2Y purinoceptor 1"/>
</dbReference>
<dbReference type="Reactome" id="R-HSA-418594">
    <property type="pathway name" value="G alpha (i) signalling events"/>
</dbReference>
<dbReference type="Reactome" id="R-HSA-418597">
    <property type="pathway name" value="G alpha (z) signalling events"/>
</dbReference>
<dbReference type="Reactome" id="R-HSA-420092">
    <property type="pathway name" value="Glucagon-type ligand receptors"/>
</dbReference>
<dbReference type="Reactome" id="R-HSA-428930">
    <property type="pathway name" value="Thromboxane signalling through TP receptor"/>
</dbReference>
<dbReference type="Reactome" id="R-HSA-432040">
    <property type="pathway name" value="Vasopressin regulates renal water homeostasis via Aquaporins"/>
</dbReference>
<dbReference type="Reactome" id="R-HSA-456926">
    <property type="pathway name" value="Thrombin signalling through proteinase activated receptors (PARs)"/>
</dbReference>
<dbReference type="Reactome" id="R-HSA-500657">
    <property type="pathway name" value="Presynaptic function of Kainate receptors"/>
</dbReference>
<dbReference type="Reactome" id="R-HSA-6814122">
    <property type="pathway name" value="Cooperation of PDCL (PhLP1) and TRiC/CCT in G-protein beta folding"/>
</dbReference>
<dbReference type="Reactome" id="R-HSA-8964315">
    <property type="pathway name" value="G beta:gamma signalling through BTK"/>
</dbReference>
<dbReference type="Reactome" id="R-HSA-8964616">
    <property type="pathway name" value="G beta:gamma signalling through CDC42"/>
</dbReference>
<dbReference type="Reactome" id="R-HSA-9009391">
    <property type="pathway name" value="Extra-nuclear estrogen signaling"/>
</dbReference>
<dbReference type="Reactome" id="R-HSA-9634597">
    <property type="pathway name" value="GPER1 signaling"/>
</dbReference>
<dbReference type="Reactome" id="R-HSA-9660821">
    <property type="pathway name" value="ADORA2B mediated anti-inflammatory cytokines production"/>
</dbReference>
<dbReference type="Reactome" id="R-HSA-9856530">
    <property type="pathway name" value="High laminar flow shear stress activates signaling by PIEZO1 and PECAM1:CDH5:KDR in endothelial cells"/>
</dbReference>
<dbReference type="Reactome" id="R-HSA-997272">
    <property type="pathway name" value="Inhibition of voltage gated Ca2+ channels via Gbeta/gamma subunits"/>
</dbReference>
<dbReference type="SignaLink" id="P61952"/>
<dbReference type="BioGRID-ORCS" id="2791">
    <property type="hits" value="23 hits in 1133 CRISPR screens"/>
</dbReference>
<dbReference type="ChiTaRS" id="GNG11">
    <property type="organism name" value="human"/>
</dbReference>
<dbReference type="GeneWiki" id="GNG11"/>
<dbReference type="GenomeRNAi" id="2791"/>
<dbReference type="Pharos" id="P61952">
    <property type="development level" value="Tbio"/>
</dbReference>
<dbReference type="PRO" id="PR:P61952"/>
<dbReference type="Proteomes" id="UP000005640">
    <property type="component" value="Chromosome 7"/>
</dbReference>
<dbReference type="RNAct" id="P61952">
    <property type="molecule type" value="protein"/>
</dbReference>
<dbReference type="Bgee" id="ENSG00000127920">
    <property type="expression patterns" value="Expressed in pigmented layer of retina and 202 other cell types or tissues"/>
</dbReference>
<dbReference type="ExpressionAtlas" id="P61952">
    <property type="expression patterns" value="baseline and differential"/>
</dbReference>
<dbReference type="GO" id="GO:0005834">
    <property type="term" value="C:heterotrimeric G-protein complex"/>
    <property type="evidence" value="ECO:0000318"/>
    <property type="project" value="GO_Central"/>
</dbReference>
<dbReference type="GO" id="GO:0005886">
    <property type="term" value="C:plasma membrane"/>
    <property type="evidence" value="ECO:0000304"/>
    <property type="project" value="Reactome"/>
</dbReference>
<dbReference type="GO" id="GO:0031681">
    <property type="term" value="F:G-protein beta-subunit binding"/>
    <property type="evidence" value="ECO:0000318"/>
    <property type="project" value="GO_Central"/>
</dbReference>
<dbReference type="GO" id="GO:0003924">
    <property type="term" value="F:GTPase activity"/>
    <property type="evidence" value="ECO:0000304"/>
    <property type="project" value="ProtInc"/>
</dbReference>
<dbReference type="GO" id="GO:0007186">
    <property type="term" value="P:G protein-coupled receptor signaling pathway"/>
    <property type="evidence" value="ECO:0000318"/>
    <property type="project" value="GO_Central"/>
</dbReference>
<dbReference type="GO" id="GO:0007165">
    <property type="term" value="P:signal transduction"/>
    <property type="evidence" value="ECO:0000304"/>
    <property type="project" value="ProtInc"/>
</dbReference>
<dbReference type="CDD" id="cd00068">
    <property type="entry name" value="GGL"/>
    <property type="match status" value="1"/>
</dbReference>
<dbReference type="FunFam" id="4.10.260.10:FF:000001">
    <property type="entry name" value="Guanine nucleotide-binding protein subunit gamma"/>
    <property type="match status" value="1"/>
</dbReference>
<dbReference type="Gene3D" id="4.10.260.10">
    <property type="entry name" value="Transducin (heterotrimeric G protein), gamma chain"/>
    <property type="match status" value="1"/>
</dbReference>
<dbReference type="InterPro" id="IPR015898">
    <property type="entry name" value="G-protein_gamma-like_dom"/>
</dbReference>
<dbReference type="InterPro" id="IPR036284">
    <property type="entry name" value="GGL_sf"/>
</dbReference>
<dbReference type="InterPro" id="IPR001770">
    <property type="entry name" value="Gprotein-gamma"/>
</dbReference>
<dbReference type="PANTHER" id="PTHR13809">
    <property type="entry name" value="GUANINE NUCLEOTIDE-BINDING PROTEIN GAMMA SUBUNIT"/>
    <property type="match status" value="1"/>
</dbReference>
<dbReference type="Pfam" id="PF00631">
    <property type="entry name" value="G-gamma"/>
    <property type="match status" value="1"/>
</dbReference>
<dbReference type="PRINTS" id="PR00321">
    <property type="entry name" value="GPROTEING"/>
</dbReference>
<dbReference type="SMART" id="SM01224">
    <property type="entry name" value="G_gamma"/>
    <property type="match status" value="1"/>
</dbReference>
<dbReference type="SMART" id="SM00224">
    <property type="entry name" value="GGL"/>
    <property type="match status" value="1"/>
</dbReference>
<dbReference type="SUPFAM" id="SSF48670">
    <property type="entry name" value="Transducin (heterotrimeric G protein), gamma chain"/>
    <property type="match status" value="1"/>
</dbReference>
<dbReference type="PROSITE" id="PS50058">
    <property type="entry name" value="G_PROTEIN_GAMMA"/>
    <property type="match status" value="1"/>
</dbReference>
<keyword id="KW-1003">Cell membrane</keyword>
<keyword id="KW-0449">Lipoprotein</keyword>
<keyword id="KW-0472">Membrane</keyword>
<keyword id="KW-0488">Methylation</keyword>
<keyword id="KW-0636">Prenylation</keyword>
<keyword id="KW-1267">Proteomics identification</keyword>
<keyword id="KW-1185">Reference proteome</keyword>
<keyword id="KW-0807">Transducer</keyword>
<gene>
    <name type="primary">GNG11</name>
    <name type="synonym">GNGT11</name>
</gene>
<name>GBG11_HUMAN</name>